<feature type="chain" id="PRO_0000263717" description="Telomere repeats-binding bouquet formation protein 2">
    <location>
        <begin position="1"/>
        <end position="220"/>
    </location>
</feature>
<feature type="sequence variant" id="VAR_029614" description="In dbSNP:rs11638723.">
    <original>P</original>
    <variation>R</variation>
    <location>
        <position position="31"/>
    </location>
</feature>
<feature type="sequence variant" id="VAR_076385" evidence="2">
    <original>S</original>
    <variation>R</variation>
    <location>
        <position position="103"/>
    </location>
</feature>
<feature type="sequence variant" id="VAR_076386" description="In dbSNP:rs1248475666." evidence="2">
    <original>H</original>
    <variation>N</variation>
    <location>
        <position position="190"/>
    </location>
</feature>
<feature type="strand" evidence="7">
    <location>
        <begin position="5"/>
        <end position="9"/>
    </location>
</feature>
<feature type="strand" evidence="7">
    <location>
        <begin position="11"/>
        <end position="13"/>
    </location>
</feature>
<feature type="helix" evidence="7">
    <location>
        <begin position="15"/>
        <end position="23"/>
    </location>
</feature>
<feature type="strand" evidence="7">
    <location>
        <begin position="24"/>
        <end position="29"/>
    </location>
</feature>
<feature type="strand" evidence="7">
    <location>
        <begin position="35"/>
        <end position="40"/>
    </location>
</feature>
<feature type="strand" evidence="7">
    <location>
        <begin position="43"/>
        <end position="45"/>
    </location>
</feature>
<feature type="helix" evidence="7">
    <location>
        <begin position="48"/>
        <end position="51"/>
    </location>
</feature>
<feature type="helix" evidence="7">
    <location>
        <begin position="54"/>
        <end position="57"/>
    </location>
</feature>
<feature type="strand" evidence="7">
    <location>
        <begin position="63"/>
        <end position="65"/>
    </location>
</feature>
<feature type="helix" evidence="7">
    <location>
        <begin position="67"/>
        <end position="73"/>
    </location>
</feature>
<feature type="strand" evidence="7">
    <location>
        <begin position="75"/>
        <end position="80"/>
    </location>
</feature>
<feature type="helix" evidence="7">
    <location>
        <begin position="83"/>
        <end position="86"/>
    </location>
</feature>
<feature type="helix" evidence="7">
    <location>
        <begin position="91"/>
        <end position="102"/>
    </location>
</feature>
<feature type="turn" evidence="7">
    <location>
        <begin position="105"/>
        <end position="107"/>
    </location>
</feature>
<feature type="helix" evidence="6">
    <location>
        <begin position="179"/>
        <end position="181"/>
    </location>
</feature>
<feature type="strand" evidence="5">
    <location>
        <begin position="189"/>
        <end position="191"/>
    </location>
</feature>
<feature type="strand" evidence="6">
    <location>
        <begin position="199"/>
        <end position="203"/>
    </location>
</feature>
<comment type="function">
    <text evidence="1">Meiosis-specific telomere-associated protein involved in meiotic telomere attachment to the nucleus inner membrane, a crucial step for homologous pairing and synapsis. Component of the MAJIN-TERB1-TERB2 complex, which promotes telomere cap exchange by mediating attachment of telomeric DNA to the inner nuclear membrane and replacement of the protective cap of telomeric chromosomes: in early meiosis, the MAJIN-TERB1-TERB2 complex associates with telomeric DNA and the shelterin/telosome complex. During prophase, the complex matures and promotes release of the shelterin/telosome complex from telomeric DNA.</text>
</comment>
<comment type="subunit">
    <text evidence="1">Component of the MAJIN-TERB1-TERB2 complex, composed of MAJIN, TERB1 and TERB2.</text>
</comment>
<comment type="interaction">
    <interactant intactId="EBI-23751757">
        <id>Q8NHR7</id>
    </interactant>
    <interactant intactId="EBI-18015780">
        <id>Q3KP22-3</id>
        <label>MAJIN</label>
    </interactant>
    <organismsDiffer>false</organismsDiffer>
    <experiments>3</experiments>
</comment>
<comment type="subcellular location">
    <subcellularLocation>
        <location evidence="1">Chromosome</location>
        <location evidence="1">Telomere</location>
    </subcellularLocation>
    <subcellularLocation>
        <location evidence="1">Nucleus inner membrane</location>
    </subcellularLocation>
    <text evidence="1">Localizes to telomeres throughout meiotic prophase I and disappears in metaphase I. In leptotene spermatocytes, localizes to telomeres that localize to the nucleus inner membrane.</text>
</comment>
<comment type="disease" evidence="3">
    <disease id="DI-06204">
        <name>Spermatogenic failure 59</name>
        <acronym>SPGF59</acronym>
        <description>An autosomal recessive male infertility disorder characterized by non-obstructive azoospermia, due to sperm maturation arrest.</description>
        <dbReference type="MIM" id="619645"/>
    </disease>
    <text>The disease may be caused by variants affecting the gene represented in this entry.</text>
</comment>
<comment type="similarity">
    <text evidence="4">Belongs to the TERB2 family.</text>
</comment>
<proteinExistence type="evidence at protein level"/>
<gene>
    <name type="primary">TERB2</name>
    <name type="synonym">C15orf43</name>
</gene>
<reference key="1">
    <citation type="journal article" date="2004" name="Genome Res.">
        <title>The status, quality, and expansion of the NIH full-length cDNA project: the Mammalian Gene Collection (MGC).</title>
        <authorList>
            <consortium name="The MGC Project Team"/>
        </authorList>
    </citation>
    <scope>NUCLEOTIDE SEQUENCE [LARGE SCALE MRNA]</scope>
    <source>
        <tissue>Testis</tissue>
    </source>
</reference>
<reference key="2">
    <citation type="journal article" date="2021" name="Hum. Genet.">
        <title>Disruption of human meiotic telomere complex genes TERB1, TERB2 and MAJIN in men with non-obstructive azoospermia.</title>
        <authorList>
            <consortium name="GEMINI Consortium"/>
            <person name="Salas-Huetos A."/>
            <person name="Tuettelmann F."/>
            <person name="Wyrwoll M.J."/>
            <person name="Kliesch S."/>
            <person name="Lopes A.M."/>
            <person name="Goncalves J."/>
            <person name="Boyden S.E."/>
            <person name="Woeste M."/>
            <person name="Hotaling J.M."/>
            <person name="Nagirnaja L."/>
            <person name="Conrad D.F."/>
            <person name="Carrell D.T."/>
            <person name="Aston K.I."/>
        </authorList>
    </citation>
    <scope>INVOLVEMENT IN SPGF59</scope>
</reference>
<reference key="3">
    <citation type="journal article" date="2021" name="Hum. Genet.">
        <authorList>
            <consortium name="GEMINI Consortium"/>
            <person name="Salas-Huetos A."/>
            <person name="Tuettelmann F."/>
            <person name="Wyrwoll M.J."/>
            <person name="Kliesch S."/>
            <person name="Lopes A.M."/>
            <person name="Goncalves J."/>
            <person name="Boyden S.E."/>
            <person name="Woeste M."/>
            <person name="Hotaling J.M."/>
            <person name="Nagirnaja L."/>
            <person name="Conrad D.F."/>
            <person name="Carrell D.T."/>
            <person name="Aston K.I."/>
        </authorList>
    </citation>
    <scope>ERRATUM OF PUBMED:33211200</scope>
</reference>
<reference key="4">
    <citation type="journal article" date="2015" name="Brain">
        <title>Heterozygous HTRA1 mutations are associated with autosomal dominant cerebral small vessel disease.</title>
        <authorList>
            <person name="Verdura E."/>
            <person name="Herve D."/>
            <person name="Scharrer E."/>
            <person name="del Mar Amador M."/>
            <person name="Guyant-Marechal L."/>
            <person name="Philippi A."/>
            <person name="Corlobe A."/>
            <person name="Bergametti F."/>
            <person name="Gazal S."/>
            <person name="Prieto-Morin C."/>
            <person name="Beaufort N."/>
            <person name="Le Bail B."/>
            <person name="Viakhireva I."/>
            <person name="Dichgans M."/>
            <person name="Chabriat H."/>
            <person name="Haffner C."/>
            <person name="Tournier-Lasserve E."/>
        </authorList>
    </citation>
    <scope>VARIANTS ARG-103 AND ASN-190</scope>
</reference>
<name>TERB2_HUMAN</name>
<accession>Q8NHR7</accession>
<sequence length="220" mass="25316">MFQGQRGWFCGSVSQDLRQFWVAEGGTISDPRAADFLFSCDASHPDTLRIYQSLDYIEDNATVFHAYYLSAVANAKIKNSVALGHFILPPACLQKEIRRKIGSFIWEQDQHFLIEKHDEVTPNEIKTLRENSELATEHKKELSKSPEKHFIRTPVVEKQMYFPLQNYPVNNMVTGYISIDAMKKFLGELHDFIPGTSGYLAYHVQNEINMSAIKNKLKRK</sequence>
<keyword id="KW-0002">3D-structure</keyword>
<keyword id="KW-0158">Chromosome</keyword>
<keyword id="KW-0472">Membrane</keyword>
<keyword id="KW-0539">Nucleus</keyword>
<keyword id="KW-1267">Proteomics identification</keyword>
<keyword id="KW-1185">Reference proteome</keyword>
<keyword id="KW-0779">Telomere</keyword>
<protein>
    <recommendedName>
        <fullName evidence="1">Telomere repeats-binding bouquet formation protein 2</fullName>
    </recommendedName>
</protein>
<organism>
    <name type="scientific">Homo sapiens</name>
    <name type="common">Human</name>
    <dbReference type="NCBI Taxonomy" id="9606"/>
    <lineage>
        <taxon>Eukaryota</taxon>
        <taxon>Metazoa</taxon>
        <taxon>Chordata</taxon>
        <taxon>Craniata</taxon>
        <taxon>Vertebrata</taxon>
        <taxon>Euteleostomi</taxon>
        <taxon>Mammalia</taxon>
        <taxon>Eutheria</taxon>
        <taxon>Euarchontoglires</taxon>
        <taxon>Primates</taxon>
        <taxon>Haplorrhini</taxon>
        <taxon>Catarrhini</taxon>
        <taxon>Hominidae</taxon>
        <taxon>Homo</taxon>
    </lineage>
</organism>
<dbReference type="EMBL" id="BC029537">
    <property type="protein sequence ID" value="AAH29537.1"/>
    <property type="molecule type" value="mRNA"/>
</dbReference>
<dbReference type="CCDS" id="CCDS10115.1"/>
<dbReference type="RefSeq" id="NP_689661.1">
    <property type="nucleotide sequence ID" value="NM_152448.3"/>
</dbReference>
<dbReference type="PDB" id="6GNX">
    <property type="method" value="X-ray"/>
    <property type="resolution" value="2.90 A"/>
    <property type="chains" value="B/D=169-220"/>
</dbReference>
<dbReference type="PDB" id="6GNY">
    <property type="method" value="X-ray"/>
    <property type="resolution" value="1.85 A"/>
    <property type="chains" value="B/D=168-207"/>
</dbReference>
<dbReference type="PDB" id="6J07">
    <property type="method" value="X-ray"/>
    <property type="resolution" value="3.30 A"/>
    <property type="chains" value="A=4-110"/>
</dbReference>
<dbReference type="PDB" id="6J08">
    <property type="method" value="X-ray"/>
    <property type="resolution" value="2.90 A"/>
    <property type="chains" value="D/E/F=174-209"/>
</dbReference>
<dbReference type="PDBsum" id="6GNX"/>
<dbReference type="PDBsum" id="6GNY"/>
<dbReference type="PDBsum" id="6J07"/>
<dbReference type="PDBsum" id="6J08"/>
<dbReference type="SMR" id="Q8NHR7"/>
<dbReference type="BioGRID" id="126925">
    <property type="interactions" value="2"/>
</dbReference>
<dbReference type="FunCoup" id="Q8NHR7">
    <property type="interactions" value="1"/>
</dbReference>
<dbReference type="IntAct" id="Q8NHR7">
    <property type="interactions" value="1"/>
</dbReference>
<dbReference type="STRING" id="9606.ENSP00000340644"/>
<dbReference type="iPTMnet" id="Q8NHR7"/>
<dbReference type="PhosphoSitePlus" id="Q8NHR7"/>
<dbReference type="BioMuta" id="TERB2"/>
<dbReference type="MassIVE" id="Q8NHR7"/>
<dbReference type="PaxDb" id="9606-ENSP00000340644"/>
<dbReference type="PeptideAtlas" id="Q8NHR7"/>
<dbReference type="Antibodypedia" id="52480">
    <property type="antibodies" value="6 antibodies from 3 providers"/>
</dbReference>
<dbReference type="DNASU" id="145645"/>
<dbReference type="Ensembl" id="ENST00000340827.4">
    <property type="protein sequence ID" value="ENSP00000340644.3"/>
    <property type="gene ID" value="ENSG00000167014.11"/>
</dbReference>
<dbReference type="GeneID" id="145645"/>
<dbReference type="KEGG" id="hsa:145645"/>
<dbReference type="MANE-Select" id="ENST00000340827.4">
    <property type="protein sequence ID" value="ENSP00000340644.3"/>
    <property type="RefSeq nucleotide sequence ID" value="NM_152448.3"/>
    <property type="RefSeq protein sequence ID" value="NP_689661.1"/>
</dbReference>
<dbReference type="UCSC" id="uc001zuk.5">
    <property type="organism name" value="human"/>
</dbReference>
<dbReference type="AGR" id="HGNC:28520"/>
<dbReference type="CTD" id="145645"/>
<dbReference type="DisGeNET" id="145645"/>
<dbReference type="GeneCards" id="TERB2"/>
<dbReference type="HGNC" id="HGNC:28520">
    <property type="gene designation" value="TERB2"/>
</dbReference>
<dbReference type="HPA" id="ENSG00000167014">
    <property type="expression patterns" value="Tissue enriched (testis)"/>
</dbReference>
<dbReference type="MalaCards" id="TERB2"/>
<dbReference type="MIM" id="617131">
    <property type="type" value="gene"/>
</dbReference>
<dbReference type="MIM" id="619645">
    <property type="type" value="phenotype"/>
</dbReference>
<dbReference type="neXtProt" id="NX_Q8NHR7"/>
<dbReference type="OpenTargets" id="ENSG00000167014"/>
<dbReference type="Orphanet" id="399805">
    <property type="disease" value="Male infertility with azoospermia or oligozoospermia due to single gene mutation"/>
</dbReference>
<dbReference type="PharmGKB" id="PA143485393"/>
<dbReference type="VEuPathDB" id="HostDB:ENSG00000167014"/>
<dbReference type="eggNOG" id="ENOG502S1BT">
    <property type="taxonomic scope" value="Eukaryota"/>
</dbReference>
<dbReference type="GeneTree" id="ENSGT00390000012336"/>
<dbReference type="HOGENOM" id="CLU_109637_0_0_1"/>
<dbReference type="InParanoid" id="Q8NHR7"/>
<dbReference type="OMA" id="WFCRSVS"/>
<dbReference type="OrthoDB" id="5278943at2759"/>
<dbReference type="PAN-GO" id="Q8NHR7">
    <property type="GO annotations" value="3 GO annotations based on evolutionary models"/>
</dbReference>
<dbReference type="PhylomeDB" id="Q8NHR7"/>
<dbReference type="TreeFam" id="TF336969"/>
<dbReference type="PathwayCommons" id="Q8NHR7"/>
<dbReference type="SignaLink" id="Q8NHR7"/>
<dbReference type="SIGNOR" id="Q8NHR7"/>
<dbReference type="BioGRID-ORCS" id="145645">
    <property type="hits" value="8 hits in 1109 CRISPR screens"/>
</dbReference>
<dbReference type="ChiTaRS" id="TERB2">
    <property type="organism name" value="human"/>
</dbReference>
<dbReference type="GenomeRNAi" id="145645"/>
<dbReference type="Pharos" id="Q8NHR7">
    <property type="development level" value="Tdark"/>
</dbReference>
<dbReference type="PRO" id="PR:Q8NHR7"/>
<dbReference type="Proteomes" id="UP000005640">
    <property type="component" value="Chromosome 15"/>
</dbReference>
<dbReference type="RNAct" id="Q8NHR7">
    <property type="molecule type" value="protein"/>
</dbReference>
<dbReference type="Bgee" id="ENSG00000167014">
    <property type="expression patterns" value="Expressed in primordial germ cell in gonad and 29 other cell types or tissues"/>
</dbReference>
<dbReference type="ExpressionAtlas" id="Q8NHR7">
    <property type="expression patterns" value="baseline and differential"/>
</dbReference>
<dbReference type="GO" id="GO:0000781">
    <property type="term" value="C:chromosome, telomeric region"/>
    <property type="evidence" value="ECO:0000250"/>
    <property type="project" value="UniProtKB"/>
</dbReference>
<dbReference type="GO" id="GO:0005637">
    <property type="term" value="C:nuclear inner membrane"/>
    <property type="evidence" value="ECO:0000250"/>
    <property type="project" value="UniProtKB"/>
</dbReference>
<dbReference type="GO" id="GO:1990918">
    <property type="term" value="P:double-strand break repair involved in meiotic recombination"/>
    <property type="evidence" value="ECO:0007669"/>
    <property type="project" value="Ensembl"/>
</dbReference>
<dbReference type="GO" id="GO:0007129">
    <property type="term" value="P:homologous chromosome pairing at meiosis"/>
    <property type="evidence" value="ECO:0000250"/>
    <property type="project" value="UniProtKB"/>
</dbReference>
<dbReference type="GO" id="GO:0070197">
    <property type="term" value="P:meiotic attachment of telomere to nuclear envelope"/>
    <property type="evidence" value="ECO:0000250"/>
    <property type="project" value="UniProtKB"/>
</dbReference>
<dbReference type="GO" id="GO:0045141">
    <property type="term" value="P:meiotic telomere clustering"/>
    <property type="evidence" value="ECO:0000250"/>
    <property type="project" value="UniProtKB"/>
</dbReference>
<dbReference type="GO" id="GO:0048477">
    <property type="term" value="P:oogenesis"/>
    <property type="evidence" value="ECO:0007669"/>
    <property type="project" value="Ensembl"/>
</dbReference>
<dbReference type="GO" id="GO:0007283">
    <property type="term" value="P:spermatogenesis"/>
    <property type="evidence" value="ECO:0007669"/>
    <property type="project" value="Ensembl"/>
</dbReference>
<dbReference type="GO" id="GO:0007130">
    <property type="term" value="P:synaptonemal complex assembly"/>
    <property type="evidence" value="ECO:0007669"/>
    <property type="project" value="Ensembl"/>
</dbReference>
<dbReference type="InterPro" id="IPR028065">
    <property type="entry name" value="TERB2"/>
</dbReference>
<dbReference type="PANTHER" id="PTHR35345">
    <property type="entry name" value="TELOMERE REPEATS-BINDING BOUQUET FORMATION PROTEIN 2"/>
    <property type="match status" value="1"/>
</dbReference>
<dbReference type="PANTHER" id="PTHR35345:SF1">
    <property type="entry name" value="TELOMERE REPEATS-BINDING BOUQUET FORMATION PROTEIN 2"/>
    <property type="match status" value="1"/>
</dbReference>
<dbReference type="Pfam" id="PF15101">
    <property type="entry name" value="TERB2"/>
    <property type="match status" value="1"/>
</dbReference>
<evidence type="ECO:0000250" key="1">
    <source>
        <dbReference type="UniProtKB" id="Q9D494"/>
    </source>
</evidence>
<evidence type="ECO:0000269" key="2">
    <source>
    </source>
</evidence>
<evidence type="ECO:0000269" key="3">
    <source>
    </source>
</evidence>
<evidence type="ECO:0000305" key="4"/>
<evidence type="ECO:0007829" key="5">
    <source>
        <dbReference type="PDB" id="6GNX"/>
    </source>
</evidence>
<evidence type="ECO:0007829" key="6">
    <source>
        <dbReference type="PDB" id="6GNY"/>
    </source>
</evidence>
<evidence type="ECO:0007829" key="7">
    <source>
        <dbReference type="PDB" id="6J07"/>
    </source>
</evidence>